<reference key="1">
    <citation type="journal article" date="2002" name="Proc. Natl. Acad. Sci. U.S.A.">
        <title>The complete genome sequence of Chlorobium tepidum TLS, a photosynthetic, anaerobic, green-sulfur bacterium.</title>
        <authorList>
            <person name="Eisen J.A."/>
            <person name="Nelson K.E."/>
            <person name="Paulsen I.T."/>
            <person name="Heidelberg J.F."/>
            <person name="Wu M."/>
            <person name="Dodson R.J."/>
            <person name="DeBoy R.T."/>
            <person name="Gwinn M.L."/>
            <person name="Nelson W.C."/>
            <person name="Haft D.H."/>
            <person name="Hickey E.K."/>
            <person name="Peterson J.D."/>
            <person name="Durkin A.S."/>
            <person name="Kolonay J.F."/>
            <person name="Yang F."/>
            <person name="Holt I.E."/>
            <person name="Umayam L.A."/>
            <person name="Mason T.M."/>
            <person name="Brenner M."/>
            <person name="Shea T.P."/>
            <person name="Parksey D.S."/>
            <person name="Nierman W.C."/>
            <person name="Feldblyum T.V."/>
            <person name="Hansen C.L."/>
            <person name="Craven M.B."/>
            <person name="Radune D."/>
            <person name="Vamathevan J.J."/>
            <person name="Khouri H.M."/>
            <person name="White O."/>
            <person name="Gruber T.M."/>
            <person name="Ketchum K.A."/>
            <person name="Venter J.C."/>
            <person name="Tettelin H."/>
            <person name="Bryant D.A."/>
            <person name="Fraser C.M."/>
        </authorList>
    </citation>
    <scope>NUCLEOTIDE SEQUENCE [LARGE SCALE GENOMIC DNA]</scope>
    <source>
        <strain>ATCC 49652 / DSM 12025 / NBRC 103806 / TLS</strain>
    </source>
</reference>
<dbReference type="EMBL" id="AE006470">
    <property type="protein sequence ID" value="AAM72602.1"/>
    <property type="molecule type" value="Genomic_DNA"/>
</dbReference>
<dbReference type="RefSeq" id="NP_662260.1">
    <property type="nucleotide sequence ID" value="NC_002932.3"/>
</dbReference>
<dbReference type="RefSeq" id="WP_010933041.1">
    <property type="nucleotide sequence ID" value="NC_002932.3"/>
</dbReference>
<dbReference type="SMR" id="Q8KCP0"/>
<dbReference type="STRING" id="194439.CT1373"/>
<dbReference type="EnsemblBacteria" id="AAM72602">
    <property type="protein sequence ID" value="AAM72602"/>
    <property type="gene ID" value="CT1373"/>
</dbReference>
<dbReference type="KEGG" id="cte:CT1373"/>
<dbReference type="PATRIC" id="fig|194439.7.peg.1248"/>
<dbReference type="eggNOG" id="COG0267">
    <property type="taxonomic scope" value="Bacteria"/>
</dbReference>
<dbReference type="HOGENOM" id="CLU_190949_3_0_10"/>
<dbReference type="Proteomes" id="UP000001007">
    <property type="component" value="Chromosome"/>
</dbReference>
<dbReference type="GO" id="GO:0005737">
    <property type="term" value="C:cytoplasm"/>
    <property type="evidence" value="ECO:0007669"/>
    <property type="project" value="UniProtKB-ARBA"/>
</dbReference>
<dbReference type="GO" id="GO:1990904">
    <property type="term" value="C:ribonucleoprotein complex"/>
    <property type="evidence" value="ECO:0007669"/>
    <property type="project" value="UniProtKB-KW"/>
</dbReference>
<dbReference type="GO" id="GO:0005840">
    <property type="term" value="C:ribosome"/>
    <property type="evidence" value="ECO:0007669"/>
    <property type="project" value="UniProtKB-KW"/>
</dbReference>
<dbReference type="GO" id="GO:0003735">
    <property type="term" value="F:structural constituent of ribosome"/>
    <property type="evidence" value="ECO:0007669"/>
    <property type="project" value="InterPro"/>
</dbReference>
<dbReference type="GO" id="GO:0006412">
    <property type="term" value="P:translation"/>
    <property type="evidence" value="ECO:0007669"/>
    <property type="project" value="UniProtKB-UniRule"/>
</dbReference>
<dbReference type="Gene3D" id="2.20.28.120">
    <property type="entry name" value="Ribosomal protein L33"/>
    <property type="match status" value="1"/>
</dbReference>
<dbReference type="HAMAP" id="MF_00294">
    <property type="entry name" value="Ribosomal_bL33"/>
    <property type="match status" value="1"/>
</dbReference>
<dbReference type="InterPro" id="IPR001705">
    <property type="entry name" value="Ribosomal_bL33"/>
</dbReference>
<dbReference type="InterPro" id="IPR038584">
    <property type="entry name" value="Ribosomal_bL33_sf"/>
</dbReference>
<dbReference type="InterPro" id="IPR011332">
    <property type="entry name" value="Ribosomal_zn-bd"/>
</dbReference>
<dbReference type="NCBIfam" id="NF001764">
    <property type="entry name" value="PRK00504.1"/>
    <property type="match status" value="1"/>
</dbReference>
<dbReference type="NCBIfam" id="NF001860">
    <property type="entry name" value="PRK00595.1"/>
    <property type="match status" value="1"/>
</dbReference>
<dbReference type="NCBIfam" id="TIGR01023">
    <property type="entry name" value="rpmG_bact"/>
    <property type="match status" value="1"/>
</dbReference>
<dbReference type="PANTHER" id="PTHR43168">
    <property type="entry name" value="50S RIBOSOMAL PROTEIN L33, CHLOROPLASTIC"/>
    <property type="match status" value="1"/>
</dbReference>
<dbReference type="PANTHER" id="PTHR43168:SF2">
    <property type="entry name" value="LARGE RIBOSOMAL SUBUNIT PROTEIN BL33C"/>
    <property type="match status" value="1"/>
</dbReference>
<dbReference type="Pfam" id="PF00471">
    <property type="entry name" value="Ribosomal_L33"/>
    <property type="match status" value="1"/>
</dbReference>
<dbReference type="SUPFAM" id="SSF57829">
    <property type="entry name" value="Zn-binding ribosomal proteins"/>
    <property type="match status" value="1"/>
</dbReference>
<keyword id="KW-1185">Reference proteome</keyword>
<keyword id="KW-0687">Ribonucleoprotein</keyword>
<keyword id="KW-0689">Ribosomal protein</keyword>
<accession>Q8KCP0</accession>
<name>RL33_CHLTE</name>
<feature type="chain" id="PRO_0000170152" description="Large ribosomal subunit protein bL33">
    <location>
        <begin position="1"/>
        <end position="60"/>
    </location>
</feature>
<protein>
    <recommendedName>
        <fullName evidence="1">Large ribosomal subunit protein bL33</fullName>
    </recommendedName>
    <alternativeName>
        <fullName evidence="2">50S ribosomal protein L33</fullName>
    </alternativeName>
</protein>
<proteinExistence type="inferred from homology"/>
<comment type="similarity">
    <text evidence="1">Belongs to the bacterial ribosomal protein bL33 family.</text>
</comment>
<evidence type="ECO:0000255" key="1">
    <source>
        <dbReference type="HAMAP-Rule" id="MF_00294"/>
    </source>
</evidence>
<evidence type="ECO:0000305" key="2"/>
<gene>
    <name evidence="1" type="primary">rpmG</name>
    <name type="ordered locus">CT1373</name>
</gene>
<organism>
    <name type="scientific">Chlorobaculum tepidum (strain ATCC 49652 / DSM 12025 / NBRC 103806 / TLS)</name>
    <name type="common">Chlorobium tepidum</name>
    <dbReference type="NCBI Taxonomy" id="194439"/>
    <lineage>
        <taxon>Bacteria</taxon>
        <taxon>Pseudomonadati</taxon>
        <taxon>Chlorobiota</taxon>
        <taxon>Chlorobiia</taxon>
        <taxon>Chlorobiales</taxon>
        <taxon>Chlorobiaceae</taxon>
        <taxon>Chlorobaculum</taxon>
    </lineage>
</organism>
<sequence>MAKGKENRIVITLECTEAKKEGVPVSRYTTTKNKKNTTERLILKKYNPNLKRHTEHKEIK</sequence>